<sequence>MSKGKSKYVIDPISVKTACTSEESYIRCVEYGKGKAHYPNLSLLAKAILAGVFVGVCAHASGIAGGHFYYHKLREYVGISMSAFVYGFTFPIAFLCIIATGSDLFTGNTLAVTTALLQRKVSLLQYLRVMSISLFGNYLGAVSFAFFVSHLSGAYEKHTDVTKNHIFQFLNDIAEKKISHTFIQCICLAIGCNIFVCLAVYFVLTIKDGSGMVFSVFFAVYAFAIAGYEHIIANMYTLNLALMVEAKVTWSKVYFHNLLPTLIGNYIAGALVLACPLFYIYRNSYRDYERTRGDGSNCGLRSLSIEMQNGSNGN</sequence>
<proteinExistence type="inferred from homology"/>
<comment type="function">
    <text evidence="1 3">Monocarboxylate-proton symporter that mediates the efflux of the waste product lactate in the intraerythrocytic parasites; active in acidic-to-neutral pH range (By similarity). Transports L-lactate (PubMed:33336890).</text>
</comment>
<comment type="catalytic activity">
    <reaction evidence="3">
        <text>(S)-lactate(in) + H(+)(in) = (S)-lactate(out) + H(+)(out)</text>
        <dbReference type="Rhea" id="RHEA:29415"/>
        <dbReference type="ChEBI" id="CHEBI:15378"/>
        <dbReference type="ChEBI" id="CHEBI:16651"/>
    </reaction>
</comment>
<comment type="catalytic activity">
    <reaction evidence="1">
        <text>formate(in) + H(+)(in) = formate(out) + H(+)(out)</text>
        <dbReference type="Rhea" id="RHEA:80887"/>
        <dbReference type="ChEBI" id="CHEBI:15378"/>
        <dbReference type="ChEBI" id="CHEBI:15740"/>
    </reaction>
</comment>
<comment type="catalytic activity">
    <reaction evidence="1">
        <text>pyruvate(out) + H(+)(out) = pyruvate(in) + H(+)(in)</text>
        <dbReference type="Rhea" id="RHEA:64720"/>
        <dbReference type="ChEBI" id="CHEBI:15361"/>
        <dbReference type="ChEBI" id="CHEBI:15378"/>
    </reaction>
</comment>
<comment type="catalytic activity">
    <reaction evidence="1">
        <text>acetate(out) + H(+)(out) = acetate(in) + H(+)(in)</text>
        <dbReference type="Rhea" id="RHEA:71803"/>
        <dbReference type="ChEBI" id="CHEBI:15378"/>
        <dbReference type="ChEBI" id="CHEBI:30089"/>
    </reaction>
</comment>
<comment type="activity regulation">
    <text evidence="3">Inhibited by the Malaria Box compound MMV007839 and its derivatives BH296 and BH267.meta.</text>
</comment>
<comment type="subunit">
    <text evidence="1">Homopentamer.</text>
</comment>
<comment type="subcellular location">
    <subcellularLocation>
        <location evidence="1">Cell membrane</location>
        <topology evidence="2">Multi-pass membrane protein</topology>
    </subcellularLocation>
    <subcellularLocation>
        <location evidence="1">Vacuole membrane</location>
        <topology evidence="2">Multi-pass membrane protein</topology>
    </subcellularLocation>
</comment>
<comment type="similarity">
    <text evidence="5">Belongs to the FNT transporter (TC 1.A.16) family.</text>
</comment>
<protein>
    <recommendedName>
        <fullName evidence="5">Formate-nitrite transporter</fullName>
        <shortName evidence="4">PkFNT</shortName>
    </recommendedName>
    <alternativeName>
        <fullName evidence="4">FNT-type lactate transporter</fullName>
    </alternativeName>
</protein>
<dbReference type="EMBL" id="AM910990">
    <property type="protein sequence ID" value="CAA9987895.1"/>
    <property type="molecule type" value="Genomic_DNA"/>
</dbReference>
<dbReference type="RefSeq" id="XP_038969626.1">
    <property type="nucleotide sequence ID" value="XM_039113993.1"/>
</dbReference>
<dbReference type="SMR" id="A0A679KXN5"/>
<dbReference type="GeneID" id="7320429"/>
<dbReference type="VEuPathDB" id="PlasmoDB:PKNH_0825200"/>
<dbReference type="InParanoid" id="A0A679KXN5"/>
<dbReference type="OrthoDB" id="4829at2759"/>
<dbReference type="Proteomes" id="UP000031513">
    <property type="component" value="Chromosome 8"/>
</dbReference>
<dbReference type="GO" id="GO:0005886">
    <property type="term" value="C:plasma membrane"/>
    <property type="evidence" value="ECO:0007669"/>
    <property type="project" value="UniProtKB-SubCell"/>
</dbReference>
<dbReference type="GO" id="GO:0005774">
    <property type="term" value="C:vacuolar membrane"/>
    <property type="evidence" value="ECO:0007669"/>
    <property type="project" value="UniProtKB-SubCell"/>
</dbReference>
<dbReference type="GO" id="GO:0015513">
    <property type="term" value="F:high-affinity secondary active nitrite transmembrane transporter activity"/>
    <property type="evidence" value="ECO:0007669"/>
    <property type="project" value="TreeGrafter"/>
</dbReference>
<dbReference type="GO" id="GO:0015707">
    <property type="term" value="P:nitrite transport"/>
    <property type="evidence" value="ECO:0007669"/>
    <property type="project" value="TreeGrafter"/>
</dbReference>
<dbReference type="Gene3D" id="1.20.1080.10">
    <property type="entry name" value="Glycerol uptake facilitator protein"/>
    <property type="match status" value="1"/>
</dbReference>
<dbReference type="InterPro" id="IPR023271">
    <property type="entry name" value="Aquaporin-like"/>
</dbReference>
<dbReference type="InterPro" id="IPR000292">
    <property type="entry name" value="For/NO2_transpt"/>
</dbReference>
<dbReference type="InterPro" id="IPR024002">
    <property type="entry name" value="For/NO2_transpt_CS"/>
</dbReference>
<dbReference type="NCBIfam" id="TIGR00790">
    <property type="entry name" value="fnt"/>
    <property type="match status" value="1"/>
</dbReference>
<dbReference type="PANTHER" id="PTHR30520">
    <property type="entry name" value="FORMATE TRANSPORTER-RELATED"/>
    <property type="match status" value="1"/>
</dbReference>
<dbReference type="PANTHER" id="PTHR30520:SF6">
    <property type="entry name" value="FORMATE_NITRATE FAMILY TRANSPORTER (EUROFUNG)"/>
    <property type="match status" value="1"/>
</dbReference>
<dbReference type="Pfam" id="PF01226">
    <property type="entry name" value="Form_Nir_trans"/>
    <property type="match status" value="1"/>
</dbReference>
<dbReference type="PROSITE" id="PS01006">
    <property type="entry name" value="FORMATE_NITRITE_TP_2"/>
    <property type="match status" value="1"/>
</dbReference>
<keyword id="KW-1003">Cell membrane</keyword>
<keyword id="KW-0472">Membrane</keyword>
<keyword id="KW-1185">Reference proteome</keyword>
<keyword id="KW-0812">Transmembrane</keyword>
<keyword id="KW-1133">Transmembrane helix</keyword>
<keyword id="KW-0813">Transport</keyword>
<keyword id="KW-0926">Vacuole</keyword>
<name>FNT_PLAKH</name>
<accession>A0A679KXN5</accession>
<reference evidence="7" key="1">
    <citation type="journal article" date="2008" name="Nature">
        <title>The genome of Plasmodium knowlesi strain H, a zoonotic malaria parasite with host range from monkey to man.</title>
        <authorList>
            <person name="Pain A."/>
            <person name="Boehme U."/>
            <person name="Berry A.E."/>
            <person name="Mungall K."/>
            <person name="Finn R."/>
            <person name="Jackson A.P."/>
            <person name="Mourier T."/>
            <person name="Mistry J."/>
            <person name="Pasini E.M."/>
            <person name="Aslett M."/>
            <person name="Balasubrammaniam S."/>
            <person name="Borgwardt K."/>
            <person name="Brooks K."/>
            <person name="Carret C."/>
            <person name="Carver T.J."/>
            <person name="Cherevach I."/>
            <person name="Chillingworth T."/>
            <person name="Clarke T.G."/>
            <person name="Galinski M.R."/>
            <person name="Hall N."/>
            <person name="Harper D."/>
            <person name="Harris D."/>
            <person name="Hauser H."/>
            <person name="Ivens A."/>
            <person name="Janssen C.S."/>
            <person name="Keane T."/>
            <person name="Larke N."/>
            <person name="Lapp S."/>
            <person name="Marti M."/>
            <person name="Moule S."/>
            <person name="Meyer I.M."/>
            <person name="Ormond D."/>
            <person name="Peters N."/>
            <person name="Sanders M."/>
            <person name="Sanders S."/>
            <person name="Sergeant T.J."/>
            <person name="Simmonds M."/>
            <person name="Smith F."/>
            <person name="Squares R."/>
            <person name="Thurston S."/>
            <person name="Tivey A.R."/>
            <person name="Walker D."/>
            <person name="White B."/>
            <person name="Zuiderwijk E."/>
            <person name="Churcher C."/>
            <person name="Quail M.A."/>
            <person name="Cowman A.F."/>
            <person name="Turner C.M.R."/>
            <person name="Rajandream M.A."/>
            <person name="Kocken C.H.M."/>
            <person name="Thomas A.W."/>
            <person name="Newbold C.I."/>
            <person name="Barrell B.G."/>
            <person name="Berriman M."/>
        </authorList>
    </citation>
    <scope>NUCLEOTIDE SEQUENCE [LARGE SCALE GENOMIC DNA]</scope>
    <source>
        <strain evidence="7">H</strain>
    </source>
</reference>
<reference evidence="5" key="2">
    <citation type="journal article" date="2021" name="ChemMedChem">
        <title>Pentafluoro-3-hydroxy-pent-2-en-1-ones Potently Inhibit FNT-Type Lactate Transporters from all Five Human-Pathogenic Plasmodium Species.</title>
        <authorList>
            <person name="Walloch P."/>
            <person name="Hansen C."/>
            <person name="Priegann T."/>
            <person name="Schade D."/>
            <person name="Beitz E."/>
        </authorList>
    </citation>
    <scope>FUNCTION</scope>
    <scope>TRANSPORTER ACTIVITY</scope>
    <scope>ACTIVITY REGULATION</scope>
</reference>
<feature type="chain" id="PRO_0000461321" description="Formate-nitrite transporter">
    <location>
        <begin position="1"/>
        <end position="314"/>
    </location>
</feature>
<feature type="topological domain" description="Cytoplasmic" evidence="5">
    <location>
        <begin position="1"/>
        <end position="47"/>
    </location>
</feature>
<feature type="transmembrane region" description="Helical" evidence="2">
    <location>
        <begin position="48"/>
        <end position="68"/>
    </location>
</feature>
<feature type="topological domain" description="Extracellular" evidence="5">
    <location>
        <begin position="69"/>
        <end position="78"/>
    </location>
</feature>
<feature type="transmembrane region" description="Helical" evidence="2">
    <location>
        <begin position="79"/>
        <end position="99"/>
    </location>
</feature>
<feature type="topological domain" description="Cytoplasmic" evidence="5">
    <location>
        <begin position="100"/>
        <end position="128"/>
    </location>
</feature>
<feature type="transmembrane region" description="Helical" evidence="2">
    <location>
        <begin position="129"/>
        <end position="149"/>
    </location>
</feature>
<feature type="topological domain" description="Extracellular" evidence="5">
    <location>
        <begin position="150"/>
        <end position="185"/>
    </location>
</feature>
<feature type="transmembrane region" description="Helical" evidence="2">
    <location>
        <begin position="186"/>
        <end position="206"/>
    </location>
</feature>
<feature type="topological domain" description="Cytoplasmic" evidence="5">
    <location>
        <begin position="207"/>
        <end position="211"/>
    </location>
</feature>
<feature type="transmembrane region" description="Helical" evidence="2">
    <location>
        <begin position="212"/>
        <end position="232"/>
    </location>
</feature>
<feature type="topological domain" description="Extracellular" evidence="5">
    <location>
        <begin position="233"/>
        <end position="257"/>
    </location>
</feature>
<feature type="transmembrane region" description="Helical" evidence="2">
    <location>
        <begin position="258"/>
        <end position="278"/>
    </location>
</feature>
<feature type="topological domain" description="Cytoplasmic" evidence="5">
    <location>
        <begin position="279"/>
        <end position="314"/>
    </location>
</feature>
<evidence type="ECO:0000250" key="1">
    <source>
        <dbReference type="UniProtKB" id="O77389"/>
    </source>
</evidence>
<evidence type="ECO:0000255" key="2"/>
<evidence type="ECO:0000269" key="3">
    <source>
    </source>
</evidence>
<evidence type="ECO:0000303" key="4">
    <source>
    </source>
</evidence>
<evidence type="ECO:0000305" key="5"/>
<evidence type="ECO:0000312" key="6">
    <source>
        <dbReference type="EMBL" id="CAA9987895.1"/>
    </source>
</evidence>
<evidence type="ECO:0000312" key="7">
    <source>
        <dbReference type="Proteomes" id="UP000031513"/>
    </source>
</evidence>
<gene>
    <name evidence="6" type="ORF">PKNH_0825200</name>
</gene>
<organism evidence="7">
    <name type="scientific">Plasmodium knowlesi (strain H)</name>
    <dbReference type="NCBI Taxonomy" id="5851"/>
    <lineage>
        <taxon>Eukaryota</taxon>
        <taxon>Sar</taxon>
        <taxon>Alveolata</taxon>
        <taxon>Apicomplexa</taxon>
        <taxon>Aconoidasida</taxon>
        <taxon>Haemosporida</taxon>
        <taxon>Plasmodiidae</taxon>
        <taxon>Plasmodium</taxon>
        <taxon>Plasmodium (Plasmodium)</taxon>
    </lineage>
</organism>